<keyword id="KW-0963">Cytoplasm</keyword>
<keyword id="KW-0664">Pyridoxine biosynthesis</keyword>
<keyword id="KW-1185">Reference proteome</keyword>
<keyword id="KW-0808">Transferase</keyword>
<proteinExistence type="inferred from homology"/>
<gene>
    <name evidence="1" type="primary">pdxJ</name>
    <name type="ordered locus">RPB_2609</name>
</gene>
<evidence type="ECO:0000255" key="1">
    <source>
        <dbReference type="HAMAP-Rule" id="MF_00279"/>
    </source>
</evidence>
<reference key="1">
    <citation type="submission" date="2006-01" db="EMBL/GenBank/DDBJ databases">
        <title>Complete sequence of Rhodopseudomonas palustris HaA2.</title>
        <authorList>
            <consortium name="US DOE Joint Genome Institute"/>
            <person name="Copeland A."/>
            <person name="Lucas S."/>
            <person name="Lapidus A."/>
            <person name="Barry K."/>
            <person name="Detter J.C."/>
            <person name="Glavina T."/>
            <person name="Hammon N."/>
            <person name="Israni S."/>
            <person name="Pitluck S."/>
            <person name="Chain P."/>
            <person name="Malfatti S."/>
            <person name="Shin M."/>
            <person name="Vergez L."/>
            <person name="Schmutz J."/>
            <person name="Larimer F."/>
            <person name="Land M."/>
            <person name="Hauser L."/>
            <person name="Pelletier D.A."/>
            <person name="Kyrpides N."/>
            <person name="Anderson I."/>
            <person name="Oda Y."/>
            <person name="Harwood C.S."/>
            <person name="Richardson P."/>
        </authorList>
    </citation>
    <scope>NUCLEOTIDE SEQUENCE [LARGE SCALE GENOMIC DNA]</scope>
    <source>
        <strain>HaA2</strain>
    </source>
</reference>
<name>PDXJ_RHOP2</name>
<protein>
    <recommendedName>
        <fullName evidence="1">Pyridoxine 5'-phosphate synthase</fullName>
        <shortName evidence="1">PNP synthase</shortName>
        <ecNumber evidence="1">2.6.99.2</ecNumber>
    </recommendedName>
</protein>
<sequence>MPKSSPLRLGVNIDHIATVRNARGGRHPDPVRAALTAIEAGADGITAHLREDRRHIRDNDMERLKAEISKPLNFEMAATPDMVRIALGVKPHAVCLVPERREELTTEGGLDVVGQRDSLAPSIARFNDAGIRVSLFIAADPAQIEMAAKLKAPAIELHTGAWCDAITDDEPAKVAEEWRRIVAGAALAQSAGLEVHAGHGLDYATAETIAALPQIVELNIGFYMIGEALFVGLGETVKAMRSAMDRGRARVIAA</sequence>
<organism>
    <name type="scientific">Rhodopseudomonas palustris (strain HaA2)</name>
    <dbReference type="NCBI Taxonomy" id="316058"/>
    <lineage>
        <taxon>Bacteria</taxon>
        <taxon>Pseudomonadati</taxon>
        <taxon>Pseudomonadota</taxon>
        <taxon>Alphaproteobacteria</taxon>
        <taxon>Hyphomicrobiales</taxon>
        <taxon>Nitrobacteraceae</taxon>
        <taxon>Rhodopseudomonas</taxon>
    </lineage>
</organism>
<dbReference type="EC" id="2.6.99.2" evidence="1"/>
<dbReference type="EMBL" id="CP000250">
    <property type="protein sequence ID" value="ABD07312.1"/>
    <property type="molecule type" value="Genomic_DNA"/>
</dbReference>
<dbReference type="RefSeq" id="WP_011441497.1">
    <property type="nucleotide sequence ID" value="NC_007778.1"/>
</dbReference>
<dbReference type="SMR" id="Q2IWU8"/>
<dbReference type="STRING" id="316058.RPB_2609"/>
<dbReference type="KEGG" id="rpb:RPB_2609"/>
<dbReference type="eggNOG" id="COG0854">
    <property type="taxonomic scope" value="Bacteria"/>
</dbReference>
<dbReference type="HOGENOM" id="CLU_074563_0_0_5"/>
<dbReference type="OrthoDB" id="9806590at2"/>
<dbReference type="UniPathway" id="UPA00244">
    <property type="reaction ID" value="UER00313"/>
</dbReference>
<dbReference type="Proteomes" id="UP000008809">
    <property type="component" value="Chromosome"/>
</dbReference>
<dbReference type="GO" id="GO:0005829">
    <property type="term" value="C:cytosol"/>
    <property type="evidence" value="ECO:0007669"/>
    <property type="project" value="TreeGrafter"/>
</dbReference>
<dbReference type="GO" id="GO:0033856">
    <property type="term" value="F:pyridoxine 5'-phosphate synthase activity"/>
    <property type="evidence" value="ECO:0007669"/>
    <property type="project" value="UniProtKB-EC"/>
</dbReference>
<dbReference type="GO" id="GO:0008615">
    <property type="term" value="P:pyridoxine biosynthetic process"/>
    <property type="evidence" value="ECO:0007669"/>
    <property type="project" value="UniProtKB-UniRule"/>
</dbReference>
<dbReference type="CDD" id="cd00003">
    <property type="entry name" value="PNPsynthase"/>
    <property type="match status" value="1"/>
</dbReference>
<dbReference type="FunFam" id="3.20.20.70:FF:000150">
    <property type="entry name" value="Pyridoxine 5'-phosphate synthase"/>
    <property type="match status" value="1"/>
</dbReference>
<dbReference type="Gene3D" id="3.20.20.70">
    <property type="entry name" value="Aldolase class I"/>
    <property type="match status" value="1"/>
</dbReference>
<dbReference type="HAMAP" id="MF_00279">
    <property type="entry name" value="PdxJ"/>
    <property type="match status" value="1"/>
</dbReference>
<dbReference type="InterPro" id="IPR013785">
    <property type="entry name" value="Aldolase_TIM"/>
</dbReference>
<dbReference type="InterPro" id="IPR004569">
    <property type="entry name" value="PyrdxlP_synth_PdxJ"/>
</dbReference>
<dbReference type="InterPro" id="IPR036130">
    <property type="entry name" value="Pyridoxine-5'_phos_synth"/>
</dbReference>
<dbReference type="NCBIfam" id="TIGR00559">
    <property type="entry name" value="pdxJ"/>
    <property type="match status" value="1"/>
</dbReference>
<dbReference type="NCBIfam" id="NF003624">
    <property type="entry name" value="PRK05265.1-2"/>
    <property type="match status" value="1"/>
</dbReference>
<dbReference type="NCBIfam" id="NF003625">
    <property type="entry name" value="PRK05265.1-3"/>
    <property type="match status" value="1"/>
</dbReference>
<dbReference type="NCBIfam" id="NF003627">
    <property type="entry name" value="PRK05265.1-5"/>
    <property type="match status" value="1"/>
</dbReference>
<dbReference type="PANTHER" id="PTHR30456">
    <property type="entry name" value="PYRIDOXINE 5'-PHOSPHATE SYNTHASE"/>
    <property type="match status" value="1"/>
</dbReference>
<dbReference type="PANTHER" id="PTHR30456:SF0">
    <property type="entry name" value="PYRIDOXINE 5'-PHOSPHATE SYNTHASE"/>
    <property type="match status" value="1"/>
</dbReference>
<dbReference type="Pfam" id="PF03740">
    <property type="entry name" value="PdxJ"/>
    <property type="match status" value="1"/>
</dbReference>
<dbReference type="SUPFAM" id="SSF63892">
    <property type="entry name" value="Pyridoxine 5'-phosphate synthase"/>
    <property type="match status" value="1"/>
</dbReference>
<comment type="function">
    <text evidence="1">Catalyzes the complicated ring closure reaction between the two acyclic compounds 1-deoxy-D-xylulose-5-phosphate (DXP) and 3-amino-2-oxopropyl phosphate (1-amino-acetone-3-phosphate or AAP) to form pyridoxine 5'-phosphate (PNP) and inorganic phosphate.</text>
</comment>
<comment type="catalytic activity">
    <reaction evidence="1">
        <text>3-amino-2-oxopropyl phosphate + 1-deoxy-D-xylulose 5-phosphate = pyridoxine 5'-phosphate + phosphate + 2 H2O + H(+)</text>
        <dbReference type="Rhea" id="RHEA:15265"/>
        <dbReference type="ChEBI" id="CHEBI:15377"/>
        <dbReference type="ChEBI" id="CHEBI:15378"/>
        <dbReference type="ChEBI" id="CHEBI:43474"/>
        <dbReference type="ChEBI" id="CHEBI:57279"/>
        <dbReference type="ChEBI" id="CHEBI:57792"/>
        <dbReference type="ChEBI" id="CHEBI:58589"/>
        <dbReference type="EC" id="2.6.99.2"/>
    </reaction>
</comment>
<comment type="pathway">
    <text evidence="1">Cofactor biosynthesis; pyridoxine 5'-phosphate biosynthesis; pyridoxine 5'-phosphate from D-erythrose 4-phosphate: step 5/5.</text>
</comment>
<comment type="subunit">
    <text evidence="1">Homooctamer; tetramer of dimers.</text>
</comment>
<comment type="subcellular location">
    <subcellularLocation>
        <location evidence="1">Cytoplasm</location>
    </subcellularLocation>
</comment>
<comment type="similarity">
    <text evidence="1">Belongs to the PNP synthase family.</text>
</comment>
<accession>Q2IWU8</accession>
<feature type="chain" id="PRO_1000022398" description="Pyridoxine 5'-phosphate synthase">
    <location>
        <begin position="1"/>
        <end position="254"/>
    </location>
</feature>
<feature type="active site" description="Proton acceptor" evidence="1">
    <location>
        <position position="48"/>
    </location>
</feature>
<feature type="active site" description="Proton acceptor" evidence="1">
    <location>
        <position position="75"/>
    </location>
</feature>
<feature type="active site" description="Proton donor" evidence="1">
    <location>
        <position position="199"/>
    </location>
</feature>
<feature type="binding site" evidence="1">
    <location>
        <position position="12"/>
    </location>
    <ligand>
        <name>3-amino-2-oxopropyl phosphate</name>
        <dbReference type="ChEBI" id="CHEBI:57279"/>
    </ligand>
</feature>
<feature type="binding site" evidence="1">
    <location>
        <begin position="14"/>
        <end position="15"/>
    </location>
    <ligand>
        <name>1-deoxy-D-xylulose 5-phosphate</name>
        <dbReference type="ChEBI" id="CHEBI:57792"/>
    </ligand>
</feature>
<feature type="binding site" evidence="1">
    <location>
        <position position="23"/>
    </location>
    <ligand>
        <name>3-amino-2-oxopropyl phosphate</name>
        <dbReference type="ChEBI" id="CHEBI:57279"/>
    </ligand>
</feature>
<feature type="binding site" evidence="1">
    <location>
        <position position="50"/>
    </location>
    <ligand>
        <name>1-deoxy-D-xylulose 5-phosphate</name>
        <dbReference type="ChEBI" id="CHEBI:57792"/>
    </ligand>
</feature>
<feature type="binding site" evidence="1">
    <location>
        <position position="55"/>
    </location>
    <ligand>
        <name>1-deoxy-D-xylulose 5-phosphate</name>
        <dbReference type="ChEBI" id="CHEBI:57792"/>
    </ligand>
</feature>
<feature type="binding site" evidence="1">
    <location>
        <position position="105"/>
    </location>
    <ligand>
        <name>1-deoxy-D-xylulose 5-phosphate</name>
        <dbReference type="ChEBI" id="CHEBI:57792"/>
    </ligand>
</feature>
<feature type="binding site" evidence="1">
    <location>
        <position position="200"/>
    </location>
    <ligand>
        <name>3-amino-2-oxopropyl phosphate</name>
        <dbReference type="ChEBI" id="CHEBI:57279"/>
    </ligand>
</feature>
<feature type="binding site" evidence="1">
    <location>
        <begin position="221"/>
        <end position="222"/>
    </location>
    <ligand>
        <name>3-amino-2-oxopropyl phosphate</name>
        <dbReference type="ChEBI" id="CHEBI:57279"/>
    </ligand>
</feature>
<feature type="site" description="Transition state stabilizer" evidence="1">
    <location>
        <position position="156"/>
    </location>
</feature>